<keyword id="KW-0963">Cytoplasm</keyword>
<keyword id="KW-0597">Phosphoprotein</keyword>
<keyword id="KW-1185">Reference proteome</keyword>
<comment type="subcellular location">
    <subcellularLocation>
        <location evidence="1">Cytoplasm</location>
    </subcellularLocation>
</comment>
<comment type="similarity">
    <text evidence="3">Belongs to the GSTCD family.</text>
</comment>
<gene>
    <name type="primary">GSTCD</name>
    <name type="ORF">QtsA-16840</name>
</gene>
<organism>
    <name type="scientific">Macaca fascicularis</name>
    <name type="common">Crab-eating macaque</name>
    <name type="synonym">Cynomolgus monkey</name>
    <dbReference type="NCBI Taxonomy" id="9541"/>
    <lineage>
        <taxon>Eukaryota</taxon>
        <taxon>Metazoa</taxon>
        <taxon>Chordata</taxon>
        <taxon>Craniata</taxon>
        <taxon>Vertebrata</taxon>
        <taxon>Euteleostomi</taxon>
        <taxon>Mammalia</taxon>
        <taxon>Eutheria</taxon>
        <taxon>Euarchontoglires</taxon>
        <taxon>Primates</taxon>
        <taxon>Haplorrhini</taxon>
        <taxon>Catarrhini</taxon>
        <taxon>Cercopithecidae</taxon>
        <taxon>Cercopithecinae</taxon>
        <taxon>Macaca</taxon>
    </lineage>
</organism>
<dbReference type="EMBL" id="AB169042">
    <property type="protein sequence ID" value="BAE01136.1"/>
    <property type="molecule type" value="mRNA"/>
</dbReference>
<dbReference type="RefSeq" id="NP_001271720.1">
    <property type="nucleotide sequence ID" value="NM_001284791.1"/>
</dbReference>
<dbReference type="STRING" id="9541.ENSMFAP00000045765"/>
<dbReference type="eggNOG" id="ENOG502QUFE">
    <property type="taxonomic scope" value="Eukaryota"/>
</dbReference>
<dbReference type="Proteomes" id="UP000233100">
    <property type="component" value="Unplaced"/>
</dbReference>
<dbReference type="GO" id="GO:0005737">
    <property type="term" value="C:cytoplasm"/>
    <property type="evidence" value="ECO:0000250"/>
    <property type="project" value="UniProtKB"/>
</dbReference>
<dbReference type="CDD" id="cd00299">
    <property type="entry name" value="GST_C_family"/>
    <property type="match status" value="1"/>
</dbReference>
<dbReference type="FunFam" id="3.40.50.150:FF:000125">
    <property type="entry name" value="Glutathione S-transferase C-terminal domain-containing protein"/>
    <property type="match status" value="1"/>
</dbReference>
<dbReference type="FunFam" id="1.20.1050.10:FF:000143">
    <property type="entry name" value="Glutathione S-transferase, C-terminal domain-containing"/>
    <property type="match status" value="1"/>
</dbReference>
<dbReference type="Gene3D" id="1.20.1050.10">
    <property type="match status" value="1"/>
</dbReference>
<dbReference type="Gene3D" id="3.40.50.150">
    <property type="entry name" value="Vaccinia Virus protein VP39"/>
    <property type="match status" value="1"/>
</dbReference>
<dbReference type="InterPro" id="IPR010987">
    <property type="entry name" value="Glutathione-S-Trfase_C-like"/>
</dbReference>
<dbReference type="InterPro" id="IPR036282">
    <property type="entry name" value="Glutathione-S-Trfase_C_sf"/>
</dbReference>
<dbReference type="InterPro" id="IPR025714">
    <property type="entry name" value="Methyltranfer_dom"/>
</dbReference>
<dbReference type="InterPro" id="IPR029063">
    <property type="entry name" value="SAM-dependent_MTases_sf"/>
</dbReference>
<dbReference type="PANTHER" id="PTHR13369">
    <property type="match status" value="1"/>
</dbReference>
<dbReference type="PANTHER" id="PTHR13369:SF0">
    <property type="entry name" value="GLUTATHIONE S-TRANSFERASE C-TERMINAL DOMAIN-CONTAINING PROTEIN"/>
    <property type="match status" value="1"/>
</dbReference>
<dbReference type="Pfam" id="PF13679">
    <property type="entry name" value="Methyltransf_32"/>
    <property type="match status" value="1"/>
</dbReference>
<dbReference type="SUPFAM" id="SSF47616">
    <property type="entry name" value="GST C-terminal domain-like"/>
    <property type="match status" value="1"/>
</dbReference>
<dbReference type="SUPFAM" id="SSF53335">
    <property type="entry name" value="S-adenosyl-L-methionine-dependent methyltransferases"/>
    <property type="match status" value="1"/>
</dbReference>
<dbReference type="PROSITE" id="PS50405">
    <property type="entry name" value="GST_CTER"/>
    <property type="match status" value="1"/>
</dbReference>
<reference key="1">
    <citation type="submission" date="2005-06" db="EMBL/GenBank/DDBJ databases">
        <title>DNA sequences of macaque genes expressed in brain or testis and its evolutionary implications.</title>
        <authorList>
            <consortium name="International consortium for macaque cDNA sequencing and analysis"/>
        </authorList>
    </citation>
    <scope>NUCLEOTIDE SEQUENCE [LARGE SCALE MRNA]</scope>
    <source>
        <tissue>Testis</tissue>
    </source>
</reference>
<feature type="chain" id="PRO_0000316953" description="Glutathione S-transferase C-terminal domain-containing protein">
    <location>
        <begin position="1"/>
        <end position="633"/>
    </location>
</feature>
<feature type="domain" description="GST C-terminal">
    <location>
        <begin position="130"/>
        <end position="332"/>
    </location>
</feature>
<feature type="region of interest" description="Disordered" evidence="2">
    <location>
        <begin position="190"/>
        <end position="232"/>
    </location>
</feature>
<feature type="modified residue" description="Phosphoserine" evidence="1">
    <location>
        <position position="233"/>
    </location>
</feature>
<sequence length="633" mass="71107">MKAIKKSLTEEEYLYLDFSHQTKGCIFPLHTSVTLFLLSYCDCKIFKICLVVTKEVSTDSSLLRDDLIQDVEIQIISRQELPPIVQNCCLPAVVERSDNFCRAGLAVVLRHIIQKSYEADPLKKELLELLGFKKTCLKACAEVSQWTRLCELTIPLAIENFLRESSDQPPTIPVEILQLEKKLSEPVRVHNDDKLRRQKLKQQKADGVGPPLTKGKAKSKVHTQETSEELDSSSESLELKVAFSKLTVQEEPATTNREPSHIRKAKASDLPPLEHVFAEGLYFTLADIVLLPCIHHFLVIICKKFSEKLVEFPLLASWYQRIQEVPRVKTAASKCGIQFLHLPKLLTVSTEQRPNLSEVPGVEGHSDPLFIGGPRPTMAKLMEKGIEVMFSPHPCPTWTVDWNVLPAAVSPKEGKMSSDRALRKQQQLNNLVYVVTNQAKPGDRIVDFCSGGGHVGIVLAHMLPSCQVTLIENKELSLIRAKKRSDELGLSNIWFIQANMEYFTGMFNIGVALHACGVATDMVIEHCIKTRASFVTCPCCYGFIQNTSKFNFPKSEQFKKTLSYKEHMILCRFADQTAVQLPPQRRLIGKQCMCLVDLDRARAAEECGYSVQVISMEPESCSPKNNMIVGVPI</sequence>
<name>GSTCD_MACFA</name>
<accession>Q4R6Y8</accession>
<proteinExistence type="evidence at transcript level"/>
<protein>
    <recommendedName>
        <fullName>Glutathione S-transferase C-terminal domain-containing protein</fullName>
    </recommendedName>
</protein>
<evidence type="ECO:0000250" key="1">
    <source>
        <dbReference type="UniProtKB" id="Q8NEC7"/>
    </source>
</evidence>
<evidence type="ECO:0000256" key="2">
    <source>
        <dbReference type="SAM" id="MobiDB-lite"/>
    </source>
</evidence>
<evidence type="ECO:0000305" key="3"/>